<reference key="1">
    <citation type="journal article" date="2008" name="J. Biotechnol.">
        <title>The genome of Xanthomonas campestris pv. campestris B100 and its use for the reconstruction of metabolic pathways involved in xanthan biosynthesis.</title>
        <authorList>
            <person name="Vorhoelter F.-J."/>
            <person name="Schneiker S."/>
            <person name="Goesmann A."/>
            <person name="Krause L."/>
            <person name="Bekel T."/>
            <person name="Kaiser O."/>
            <person name="Linke B."/>
            <person name="Patschkowski T."/>
            <person name="Rueckert C."/>
            <person name="Schmid J."/>
            <person name="Sidhu V.K."/>
            <person name="Sieber V."/>
            <person name="Tauch A."/>
            <person name="Watt S.A."/>
            <person name="Weisshaar B."/>
            <person name="Becker A."/>
            <person name="Niehaus K."/>
            <person name="Puehler A."/>
        </authorList>
    </citation>
    <scope>NUCLEOTIDE SEQUENCE [LARGE SCALE GENOMIC DNA]</scope>
    <source>
        <strain>B100</strain>
    </source>
</reference>
<name>RNH2_XANCB</name>
<protein>
    <recommendedName>
        <fullName evidence="1">Ribonuclease HII</fullName>
        <shortName evidence="1">RNase HII</shortName>
        <ecNumber evidence="1">3.1.26.4</ecNumber>
    </recommendedName>
</protein>
<organism>
    <name type="scientific">Xanthomonas campestris pv. campestris (strain B100)</name>
    <dbReference type="NCBI Taxonomy" id="509169"/>
    <lineage>
        <taxon>Bacteria</taxon>
        <taxon>Pseudomonadati</taxon>
        <taxon>Pseudomonadota</taxon>
        <taxon>Gammaproteobacteria</taxon>
        <taxon>Lysobacterales</taxon>
        <taxon>Lysobacteraceae</taxon>
        <taxon>Xanthomonas</taxon>
    </lineage>
</organism>
<evidence type="ECO:0000255" key="1">
    <source>
        <dbReference type="HAMAP-Rule" id="MF_00052"/>
    </source>
</evidence>
<evidence type="ECO:0000255" key="2">
    <source>
        <dbReference type="PROSITE-ProRule" id="PRU01319"/>
    </source>
</evidence>
<comment type="function">
    <text evidence="1">Endonuclease that specifically degrades the RNA of RNA-DNA hybrids.</text>
</comment>
<comment type="catalytic activity">
    <reaction evidence="1">
        <text>Endonucleolytic cleavage to 5'-phosphomonoester.</text>
        <dbReference type="EC" id="3.1.26.4"/>
    </reaction>
</comment>
<comment type="cofactor">
    <cofactor evidence="1">
        <name>Mn(2+)</name>
        <dbReference type="ChEBI" id="CHEBI:29035"/>
    </cofactor>
    <cofactor evidence="1">
        <name>Mg(2+)</name>
        <dbReference type="ChEBI" id="CHEBI:18420"/>
    </cofactor>
    <text evidence="1">Manganese or magnesium. Binds 1 divalent metal ion per monomer in the absence of substrate. May bind a second metal ion after substrate binding.</text>
</comment>
<comment type="subcellular location">
    <subcellularLocation>
        <location evidence="1">Cytoplasm</location>
    </subcellularLocation>
</comment>
<comment type="similarity">
    <text evidence="1">Belongs to the RNase HII family.</text>
</comment>
<feature type="chain" id="PRO_0000334972" description="Ribonuclease HII">
    <location>
        <begin position="1"/>
        <end position="240"/>
    </location>
</feature>
<feature type="domain" description="RNase H type-2" evidence="2">
    <location>
        <begin position="31"/>
        <end position="222"/>
    </location>
</feature>
<feature type="binding site" evidence="1">
    <location>
        <position position="37"/>
    </location>
    <ligand>
        <name>a divalent metal cation</name>
        <dbReference type="ChEBI" id="CHEBI:60240"/>
    </ligand>
</feature>
<feature type="binding site" evidence="1">
    <location>
        <position position="38"/>
    </location>
    <ligand>
        <name>a divalent metal cation</name>
        <dbReference type="ChEBI" id="CHEBI:60240"/>
    </ligand>
</feature>
<feature type="binding site" evidence="1">
    <location>
        <position position="130"/>
    </location>
    <ligand>
        <name>a divalent metal cation</name>
        <dbReference type="ChEBI" id="CHEBI:60240"/>
    </ligand>
</feature>
<accession>B0RW80</accession>
<keyword id="KW-0963">Cytoplasm</keyword>
<keyword id="KW-0255">Endonuclease</keyword>
<keyword id="KW-0378">Hydrolase</keyword>
<keyword id="KW-0464">Manganese</keyword>
<keyword id="KW-0479">Metal-binding</keyword>
<keyword id="KW-0540">Nuclease</keyword>
<sequence length="240" mass="25936">MTRSSSDRAIVVPAAQNALFTDSPFPTPDSRLIAGVDEAGRGPLAGPVAVAAVVFDPAKPRINGLDDSKQLSAERREQLYARIVDRALAWSVVLIDSEEIDRINIYQATMLGMRRAVEGVAHVAGFARIDGNRVPKGLPFPAEALIGGDALDRAIMAASIVAKVTRDRLMRELHAQHPEYRFDLHKGYSTPAHLAALQTHGPCPQHRRSFAPVRRALGLETAQTAWDVPCAPADGLLLAE</sequence>
<dbReference type="EC" id="3.1.26.4" evidence="1"/>
<dbReference type="EMBL" id="AM920689">
    <property type="protein sequence ID" value="CAP52298.1"/>
    <property type="molecule type" value="Genomic_DNA"/>
</dbReference>
<dbReference type="SMR" id="B0RW80"/>
<dbReference type="KEGG" id="xca:xcc-b100_2937"/>
<dbReference type="HOGENOM" id="CLU_036532_3_2_6"/>
<dbReference type="Proteomes" id="UP000001188">
    <property type="component" value="Chromosome"/>
</dbReference>
<dbReference type="GO" id="GO:0005737">
    <property type="term" value="C:cytoplasm"/>
    <property type="evidence" value="ECO:0007669"/>
    <property type="project" value="UniProtKB-SubCell"/>
</dbReference>
<dbReference type="GO" id="GO:0032299">
    <property type="term" value="C:ribonuclease H2 complex"/>
    <property type="evidence" value="ECO:0007669"/>
    <property type="project" value="TreeGrafter"/>
</dbReference>
<dbReference type="GO" id="GO:0030145">
    <property type="term" value="F:manganese ion binding"/>
    <property type="evidence" value="ECO:0007669"/>
    <property type="project" value="UniProtKB-UniRule"/>
</dbReference>
<dbReference type="GO" id="GO:0003723">
    <property type="term" value="F:RNA binding"/>
    <property type="evidence" value="ECO:0007669"/>
    <property type="project" value="InterPro"/>
</dbReference>
<dbReference type="GO" id="GO:0004523">
    <property type="term" value="F:RNA-DNA hybrid ribonuclease activity"/>
    <property type="evidence" value="ECO:0007669"/>
    <property type="project" value="UniProtKB-UniRule"/>
</dbReference>
<dbReference type="GO" id="GO:0043137">
    <property type="term" value="P:DNA replication, removal of RNA primer"/>
    <property type="evidence" value="ECO:0007669"/>
    <property type="project" value="TreeGrafter"/>
</dbReference>
<dbReference type="GO" id="GO:0006298">
    <property type="term" value="P:mismatch repair"/>
    <property type="evidence" value="ECO:0007669"/>
    <property type="project" value="TreeGrafter"/>
</dbReference>
<dbReference type="CDD" id="cd07182">
    <property type="entry name" value="RNase_HII_bacteria_HII_like"/>
    <property type="match status" value="1"/>
</dbReference>
<dbReference type="FunFam" id="3.30.420.10:FF:000142">
    <property type="entry name" value="Ribonuclease HII"/>
    <property type="match status" value="1"/>
</dbReference>
<dbReference type="Gene3D" id="3.30.420.10">
    <property type="entry name" value="Ribonuclease H-like superfamily/Ribonuclease H"/>
    <property type="match status" value="1"/>
</dbReference>
<dbReference type="HAMAP" id="MF_00052_B">
    <property type="entry name" value="RNase_HII_B"/>
    <property type="match status" value="1"/>
</dbReference>
<dbReference type="InterPro" id="IPR022898">
    <property type="entry name" value="RNase_HII"/>
</dbReference>
<dbReference type="InterPro" id="IPR001352">
    <property type="entry name" value="RNase_HII/HIII"/>
</dbReference>
<dbReference type="InterPro" id="IPR024567">
    <property type="entry name" value="RNase_HII/HIII_dom"/>
</dbReference>
<dbReference type="InterPro" id="IPR012337">
    <property type="entry name" value="RNaseH-like_sf"/>
</dbReference>
<dbReference type="InterPro" id="IPR036397">
    <property type="entry name" value="RNaseH_sf"/>
</dbReference>
<dbReference type="NCBIfam" id="NF000595">
    <property type="entry name" value="PRK00015.1-3"/>
    <property type="match status" value="1"/>
</dbReference>
<dbReference type="PANTHER" id="PTHR10954">
    <property type="entry name" value="RIBONUCLEASE H2 SUBUNIT A"/>
    <property type="match status" value="1"/>
</dbReference>
<dbReference type="PANTHER" id="PTHR10954:SF18">
    <property type="entry name" value="RIBONUCLEASE HII"/>
    <property type="match status" value="1"/>
</dbReference>
<dbReference type="Pfam" id="PF01351">
    <property type="entry name" value="RNase_HII"/>
    <property type="match status" value="1"/>
</dbReference>
<dbReference type="SUPFAM" id="SSF53098">
    <property type="entry name" value="Ribonuclease H-like"/>
    <property type="match status" value="1"/>
</dbReference>
<dbReference type="PROSITE" id="PS51975">
    <property type="entry name" value="RNASE_H_2"/>
    <property type="match status" value="1"/>
</dbReference>
<gene>
    <name evidence="1" type="primary">rnhB</name>
    <name type="ordered locus">xcc-b100_2937</name>
</gene>
<proteinExistence type="inferred from homology"/>